<comment type="function">
    <text evidence="1">Involved in the modulation of the specificity of the ClpAP-mediated ATP-dependent protein degradation.</text>
</comment>
<comment type="subunit">
    <text evidence="1">Binds to the N-terminal domain of the chaperone ClpA.</text>
</comment>
<comment type="similarity">
    <text evidence="1">Belongs to the ClpS family.</text>
</comment>
<reference key="1">
    <citation type="journal article" date="2005" name="Nat. Biotechnol.">
        <title>Complete genome sequence of the plant commensal Pseudomonas fluorescens Pf-5.</title>
        <authorList>
            <person name="Paulsen I.T."/>
            <person name="Press C.M."/>
            <person name="Ravel J."/>
            <person name="Kobayashi D.Y."/>
            <person name="Myers G.S.A."/>
            <person name="Mavrodi D.V."/>
            <person name="DeBoy R.T."/>
            <person name="Seshadri R."/>
            <person name="Ren Q."/>
            <person name="Madupu R."/>
            <person name="Dodson R.J."/>
            <person name="Durkin A.S."/>
            <person name="Brinkac L.M."/>
            <person name="Daugherty S.C."/>
            <person name="Sullivan S.A."/>
            <person name="Rosovitz M.J."/>
            <person name="Gwinn M.L."/>
            <person name="Zhou L."/>
            <person name="Schneider D.J."/>
            <person name="Cartinhour S.W."/>
            <person name="Nelson W.C."/>
            <person name="Weidman J."/>
            <person name="Watkins K."/>
            <person name="Tran K."/>
            <person name="Khouri H."/>
            <person name="Pierson E.A."/>
            <person name="Pierson L.S. III"/>
            <person name="Thomashow L.S."/>
            <person name="Loper J.E."/>
        </authorList>
    </citation>
    <scope>NUCLEOTIDE SEQUENCE [LARGE SCALE GENOMIC DNA]</scope>
    <source>
        <strain>ATCC BAA-477 / NRRL B-23932 / Pf-5</strain>
    </source>
</reference>
<organism>
    <name type="scientific">Pseudomonas fluorescens (strain ATCC BAA-477 / NRRL B-23932 / Pf-5)</name>
    <dbReference type="NCBI Taxonomy" id="220664"/>
    <lineage>
        <taxon>Bacteria</taxon>
        <taxon>Pseudomonadati</taxon>
        <taxon>Pseudomonadota</taxon>
        <taxon>Gammaproteobacteria</taxon>
        <taxon>Pseudomonadales</taxon>
        <taxon>Pseudomonadaceae</taxon>
        <taxon>Pseudomonas</taxon>
    </lineage>
</organism>
<dbReference type="EMBL" id="CP000076">
    <property type="protein sequence ID" value="AAY93150.1"/>
    <property type="molecule type" value="Genomic_DNA"/>
</dbReference>
<dbReference type="RefSeq" id="WP_011062173.1">
    <property type="nucleotide sequence ID" value="NC_004129.6"/>
</dbReference>
<dbReference type="SMR" id="Q4K9U7"/>
<dbReference type="STRING" id="220664.PFL_3886"/>
<dbReference type="GeneID" id="57476953"/>
<dbReference type="KEGG" id="pfl:PFL_3886"/>
<dbReference type="PATRIC" id="fig|220664.5.peg.3981"/>
<dbReference type="eggNOG" id="COG2127">
    <property type="taxonomic scope" value="Bacteria"/>
</dbReference>
<dbReference type="HOGENOM" id="CLU_134358_2_0_6"/>
<dbReference type="Proteomes" id="UP000008540">
    <property type="component" value="Chromosome"/>
</dbReference>
<dbReference type="GO" id="GO:0030163">
    <property type="term" value="P:protein catabolic process"/>
    <property type="evidence" value="ECO:0007669"/>
    <property type="project" value="InterPro"/>
</dbReference>
<dbReference type="GO" id="GO:0006508">
    <property type="term" value="P:proteolysis"/>
    <property type="evidence" value="ECO:0007669"/>
    <property type="project" value="UniProtKB-UniRule"/>
</dbReference>
<dbReference type="FunFam" id="3.30.1390.10:FF:000002">
    <property type="entry name" value="ATP-dependent Clp protease adapter protein ClpS"/>
    <property type="match status" value="1"/>
</dbReference>
<dbReference type="Gene3D" id="3.30.1390.10">
    <property type="match status" value="1"/>
</dbReference>
<dbReference type="HAMAP" id="MF_00302">
    <property type="entry name" value="ClpS"/>
    <property type="match status" value="1"/>
</dbReference>
<dbReference type="InterPro" id="IPR022935">
    <property type="entry name" value="ClpS"/>
</dbReference>
<dbReference type="InterPro" id="IPR003769">
    <property type="entry name" value="ClpS_core"/>
</dbReference>
<dbReference type="InterPro" id="IPR014719">
    <property type="entry name" value="Ribosomal_bL12_C/ClpS-like"/>
</dbReference>
<dbReference type="NCBIfam" id="NF000669">
    <property type="entry name" value="PRK00033.1-2"/>
    <property type="match status" value="1"/>
</dbReference>
<dbReference type="NCBIfam" id="NF000672">
    <property type="entry name" value="PRK00033.1-5"/>
    <property type="match status" value="1"/>
</dbReference>
<dbReference type="PANTHER" id="PTHR33473:SF19">
    <property type="entry name" value="ATP-DEPENDENT CLP PROTEASE ADAPTER PROTEIN CLPS"/>
    <property type="match status" value="1"/>
</dbReference>
<dbReference type="PANTHER" id="PTHR33473">
    <property type="entry name" value="ATP-DEPENDENT CLP PROTEASE ADAPTER PROTEIN CLPS1, CHLOROPLASTIC"/>
    <property type="match status" value="1"/>
</dbReference>
<dbReference type="Pfam" id="PF02617">
    <property type="entry name" value="ClpS"/>
    <property type="match status" value="1"/>
</dbReference>
<dbReference type="SUPFAM" id="SSF54736">
    <property type="entry name" value="ClpS-like"/>
    <property type="match status" value="1"/>
</dbReference>
<proteinExistence type="inferred from homology"/>
<protein>
    <recommendedName>
        <fullName evidence="1">ATP-dependent Clp protease adapter protein ClpS</fullName>
    </recommendedName>
</protein>
<gene>
    <name evidence="1" type="primary">clpS</name>
    <name type="ordered locus">PFL_3886</name>
</gene>
<evidence type="ECO:0000255" key="1">
    <source>
        <dbReference type="HAMAP-Rule" id="MF_00302"/>
    </source>
</evidence>
<accession>Q4K9U7</accession>
<name>CLPS_PSEF5</name>
<feature type="chain" id="PRO_0000300718" description="ATP-dependent Clp protease adapter protein ClpS">
    <location>
        <begin position="1"/>
        <end position="120"/>
    </location>
</feature>
<sequence>MHAISQIRLTFNQDRPDLHDDDSAGLAVQEAKPALQAPPMYKVVLFNDDYTPMDFVVEVLEMFFNLNRELATKVMLAVHTEGRAVCGLFTRDIAETKAMQVNQYARESQHPLLCEIEKDG</sequence>